<proteinExistence type="inferred from homology"/>
<evidence type="ECO:0000255" key="1">
    <source>
        <dbReference type="HAMAP-Rule" id="MF_00337"/>
    </source>
</evidence>
<reference key="1">
    <citation type="journal article" date="2005" name="Genome Res.">
        <title>The Chlamydophila abortus genome sequence reveals an array of variable proteins that contribute to interspecies variation.</title>
        <authorList>
            <person name="Thomson N.R."/>
            <person name="Yeats C."/>
            <person name="Bell K."/>
            <person name="Holden M.T.G."/>
            <person name="Bentley S.D."/>
            <person name="Livingstone M."/>
            <person name="Cerdeno-Tarraga A.-M."/>
            <person name="Harris B."/>
            <person name="Doggett J."/>
            <person name="Ormond D."/>
            <person name="Mungall K."/>
            <person name="Clarke K."/>
            <person name="Feltwell T."/>
            <person name="Hance Z."/>
            <person name="Sanders M."/>
            <person name="Quail M.A."/>
            <person name="Price C."/>
            <person name="Barrell B.G."/>
            <person name="Parkhill J."/>
            <person name="Longbottom D."/>
        </authorList>
    </citation>
    <scope>NUCLEOTIDE SEQUENCE [LARGE SCALE GENOMIC DNA]</scope>
    <source>
        <strain>DSM 27085 / S26/3</strain>
    </source>
</reference>
<feature type="chain" id="PRO_0000303699" description="Exodeoxyribonuclease 7 small subunit">
    <location>
        <begin position="1"/>
        <end position="75"/>
    </location>
</feature>
<organism>
    <name type="scientific">Chlamydia abortus (strain DSM 27085 / S26/3)</name>
    <name type="common">Chlamydophila abortus</name>
    <dbReference type="NCBI Taxonomy" id="218497"/>
    <lineage>
        <taxon>Bacteria</taxon>
        <taxon>Pseudomonadati</taxon>
        <taxon>Chlamydiota</taxon>
        <taxon>Chlamydiia</taxon>
        <taxon>Chlamydiales</taxon>
        <taxon>Chlamydiaceae</taxon>
        <taxon>Chlamydia/Chlamydophila group</taxon>
        <taxon>Chlamydia</taxon>
    </lineage>
</organism>
<dbReference type="EC" id="3.1.11.6" evidence="1"/>
<dbReference type="EMBL" id="CR848038">
    <property type="protein sequence ID" value="CAH63753.1"/>
    <property type="molecule type" value="Genomic_DNA"/>
</dbReference>
<dbReference type="RefSeq" id="WP_011096970.1">
    <property type="nucleotide sequence ID" value="NC_004552.2"/>
</dbReference>
<dbReference type="SMR" id="Q5L6H2"/>
<dbReference type="KEGG" id="cab:CAB303"/>
<dbReference type="eggNOG" id="COG1722">
    <property type="taxonomic scope" value="Bacteria"/>
</dbReference>
<dbReference type="HOGENOM" id="CLU_145918_3_4_0"/>
<dbReference type="OrthoDB" id="21553at2"/>
<dbReference type="Proteomes" id="UP000001012">
    <property type="component" value="Chromosome"/>
</dbReference>
<dbReference type="GO" id="GO:0005829">
    <property type="term" value="C:cytosol"/>
    <property type="evidence" value="ECO:0007669"/>
    <property type="project" value="TreeGrafter"/>
</dbReference>
<dbReference type="GO" id="GO:0009318">
    <property type="term" value="C:exodeoxyribonuclease VII complex"/>
    <property type="evidence" value="ECO:0007669"/>
    <property type="project" value="InterPro"/>
</dbReference>
<dbReference type="GO" id="GO:0008855">
    <property type="term" value="F:exodeoxyribonuclease VII activity"/>
    <property type="evidence" value="ECO:0007669"/>
    <property type="project" value="UniProtKB-UniRule"/>
</dbReference>
<dbReference type="GO" id="GO:0006308">
    <property type="term" value="P:DNA catabolic process"/>
    <property type="evidence" value="ECO:0007669"/>
    <property type="project" value="UniProtKB-UniRule"/>
</dbReference>
<dbReference type="Gene3D" id="1.10.287.1040">
    <property type="entry name" value="Exonuclease VII, small subunit"/>
    <property type="match status" value="1"/>
</dbReference>
<dbReference type="HAMAP" id="MF_00337">
    <property type="entry name" value="Exonuc_7_S"/>
    <property type="match status" value="1"/>
</dbReference>
<dbReference type="InterPro" id="IPR003761">
    <property type="entry name" value="Exonuc_VII_S"/>
</dbReference>
<dbReference type="InterPro" id="IPR037004">
    <property type="entry name" value="Exonuc_VII_ssu_sf"/>
</dbReference>
<dbReference type="NCBIfam" id="NF002140">
    <property type="entry name" value="PRK00977.1-4"/>
    <property type="match status" value="1"/>
</dbReference>
<dbReference type="NCBIfam" id="TIGR01280">
    <property type="entry name" value="xseB"/>
    <property type="match status" value="1"/>
</dbReference>
<dbReference type="PANTHER" id="PTHR34137">
    <property type="entry name" value="EXODEOXYRIBONUCLEASE 7 SMALL SUBUNIT"/>
    <property type="match status" value="1"/>
</dbReference>
<dbReference type="PANTHER" id="PTHR34137:SF1">
    <property type="entry name" value="EXODEOXYRIBONUCLEASE 7 SMALL SUBUNIT"/>
    <property type="match status" value="1"/>
</dbReference>
<dbReference type="Pfam" id="PF02609">
    <property type="entry name" value="Exonuc_VII_S"/>
    <property type="match status" value="1"/>
</dbReference>
<dbReference type="PIRSF" id="PIRSF006488">
    <property type="entry name" value="Exonuc_VII_S"/>
    <property type="match status" value="1"/>
</dbReference>
<dbReference type="SUPFAM" id="SSF116842">
    <property type="entry name" value="XseB-like"/>
    <property type="match status" value="1"/>
</dbReference>
<accession>Q5L6H2</accession>
<keyword id="KW-0963">Cytoplasm</keyword>
<keyword id="KW-0269">Exonuclease</keyword>
<keyword id="KW-0378">Hydrolase</keyword>
<keyword id="KW-0540">Nuclease</keyword>
<name>EX7S_CHLAB</name>
<comment type="function">
    <text evidence="1">Bidirectionally degrades single-stranded DNA into large acid-insoluble oligonucleotides, which are then degraded further into small acid-soluble oligonucleotides.</text>
</comment>
<comment type="catalytic activity">
    <reaction evidence="1">
        <text>Exonucleolytic cleavage in either 5'- to 3'- or 3'- to 5'-direction to yield nucleoside 5'-phosphates.</text>
        <dbReference type="EC" id="3.1.11.6"/>
    </reaction>
</comment>
<comment type="subunit">
    <text evidence="1">Heterooligomer composed of large and small subunits.</text>
</comment>
<comment type="subcellular location">
    <subcellularLocation>
        <location evidence="1">Cytoplasm</location>
    </subcellularLocation>
</comment>
<comment type="similarity">
    <text evidence="1">Belongs to the XseB family.</text>
</comment>
<sequence length="75" mass="8959">MEEITFEKAMERLEEIVDLMNQPSTSLDASLKFYEEADALMRICESRIRKAEERVRELSEKRNEDFLSEEESFVH</sequence>
<gene>
    <name evidence="1" type="primary">xseB</name>
    <name type="ordered locus">CAB303</name>
</gene>
<protein>
    <recommendedName>
        <fullName evidence="1">Exodeoxyribonuclease 7 small subunit</fullName>
        <ecNumber evidence="1">3.1.11.6</ecNumber>
    </recommendedName>
    <alternativeName>
        <fullName evidence="1">Exodeoxyribonuclease VII small subunit</fullName>
        <shortName evidence="1">Exonuclease VII small subunit</shortName>
    </alternativeName>
</protein>